<keyword id="KW-0963">Cytoplasm</keyword>
<keyword id="KW-0456">Lyase</keyword>
<keyword id="KW-0704">Schiff base</keyword>
<comment type="function">
    <text evidence="1">Catalyzes a reversible aldol reaction between acetaldehyde and D-glyceraldehyde 3-phosphate to generate 2-deoxy-D-ribose 5-phosphate.</text>
</comment>
<comment type="catalytic activity">
    <reaction evidence="1">
        <text>2-deoxy-D-ribose 5-phosphate = D-glyceraldehyde 3-phosphate + acetaldehyde</text>
        <dbReference type="Rhea" id="RHEA:12821"/>
        <dbReference type="ChEBI" id="CHEBI:15343"/>
        <dbReference type="ChEBI" id="CHEBI:59776"/>
        <dbReference type="ChEBI" id="CHEBI:62877"/>
        <dbReference type="EC" id="4.1.2.4"/>
    </reaction>
</comment>
<comment type="pathway">
    <text evidence="1">Carbohydrate degradation; 2-deoxy-D-ribose 1-phosphate degradation; D-glyceraldehyde 3-phosphate and acetaldehyde from 2-deoxy-alpha-D-ribose 1-phosphate: step 2/2.</text>
</comment>
<comment type="subcellular location">
    <subcellularLocation>
        <location evidence="1">Cytoplasm</location>
    </subcellularLocation>
</comment>
<comment type="similarity">
    <text evidence="1">Belongs to the DeoC/FbaB aldolase family. DeoC type 2 subfamily.</text>
</comment>
<dbReference type="EC" id="4.1.2.4" evidence="1"/>
<dbReference type="EMBL" id="AP009240">
    <property type="protein sequence ID" value="BAG80180.1"/>
    <property type="molecule type" value="Genomic_DNA"/>
</dbReference>
<dbReference type="RefSeq" id="WP_001295412.1">
    <property type="nucleotide sequence ID" value="NC_011415.1"/>
</dbReference>
<dbReference type="SMR" id="B6I6M8"/>
<dbReference type="GeneID" id="93777463"/>
<dbReference type="KEGG" id="ecy:ECSE_4656"/>
<dbReference type="HOGENOM" id="CLU_053595_3_1_6"/>
<dbReference type="UniPathway" id="UPA00002">
    <property type="reaction ID" value="UER00468"/>
</dbReference>
<dbReference type="Proteomes" id="UP000008199">
    <property type="component" value="Chromosome"/>
</dbReference>
<dbReference type="GO" id="GO:0005737">
    <property type="term" value="C:cytoplasm"/>
    <property type="evidence" value="ECO:0007669"/>
    <property type="project" value="UniProtKB-SubCell"/>
</dbReference>
<dbReference type="GO" id="GO:0004139">
    <property type="term" value="F:deoxyribose-phosphate aldolase activity"/>
    <property type="evidence" value="ECO:0007669"/>
    <property type="project" value="UniProtKB-UniRule"/>
</dbReference>
<dbReference type="GO" id="GO:0006018">
    <property type="term" value="P:2-deoxyribose 1-phosphate catabolic process"/>
    <property type="evidence" value="ECO:0007669"/>
    <property type="project" value="UniProtKB-UniRule"/>
</dbReference>
<dbReference type="GO" id="GO:0016052">
    <property type="term" value="P:carbohydrate catabolic process"/>
    <property type="evidence" value="ECO:0007669"/>
    <property type="project" value="TreeGrafter"/>
</dbReference>
<dbReference type="GO" id="GO:0009264">
    <property type="term" value="P:deoxyribonucleotide catabolic process"/>
    <property type="evidence" value="ECO:0007669"/>
    <property type="project" value="InterPro"/>
</dbReference>
<dbReference type="CDD" id="cd00959">
    <property type="entry name" value="DeoC"/>
    <property type="match status" value="1"/>
</dbReference>
<dbReference type="FunFam" id="3.20.20.70:FF:000034">
    <property type="entry name" value="Deoxyribose-phosphate aldolase"/>
    <property type="match status" value="1"/>
</dbReference>
<dbReference type="Gene3D" id="3.20.20.70">
    <property type="entry name" value="Aldolase class I"/>
    <property type="match status" value="1"/>
</dbReference>
<dbReference type="HAMAP" id="MF_00592">
    <property type="entry name" value="DeoC_type2"/>
    <property type="match status" value="1"/>
</dbReference>
<dbReference type="InterPro" id="IPR013785">
    <property type="entry name" value="Aldolase_TIM"/>
</dbReference>
<dbReference type="InterPro" id="IPR011343">
    <property type="entry name" value="DeoC"/>
</dbReference>
<dbReference type="InterPro" id="IPR002915">
    <property type="entry name" value="DeoC/FbaB/LacD_aldolase"/>
</dbReference>
<dbReference type="InterPro" id="IPR023649">
    <property type="entry name" value="DeoC_typeII"/>
</dbReference>
<dbReference type="NCBIfam" id="TIGR00126">
    <property type="entry name" value="deoC"/>
    <property type="match status" value="1"/>
</dbReference>
<dbReference type="PANTHER" id="PTHR10889">
    <property type="entry name" value="DEOXYRIBOSE-PHOSPHATE ALDOLASE"/>
    <property type="match status" value="1"/>
</dbReference>
<dbReference type="PANTHER" id="PTHR10889:SF3">
    <property type="entry name" value="DEOXYRIBOSE-PHOSPHATE ALDOLASE"/>
    <property type="match status" value="1"/>
</dbReference>
<dbReference type="Pfam" id="PF01791">
    <property type="entry name" value="DeoC"/>
    <property type="match status" value="1"/>
</dbReference>
<dbReference type="PIRSF" id="PIRSF001357">
    <property type="entry name" value="DeoC"/>
    <property type="match status" value="1"/>
</dbReference>
<dbReference type="SMART" id="SM01133">
    <property type="entry name" value="DeoC"/>
    <property type="match status" value="1"/>
</dbReference>
<dbReference type="SUPFAM" id="SSF51569">
    <property type="entry name" value="Aldolase"/>
    <property type="match status" value="1"/>
</dbReference>
<proteinExistence type="inferred from homology"/>
<sequence length="259" mass="27748">MTDLKASSLRALKLMDLTTLNDDDTDEKVIALCHQAKTPVGNTAAICIYPRFIPIARKTLKEQGTPEIRIATVTNFPHGNDDIEIALAETRAAIAYGADEVDVVFPYRALMAGNEQVGFDLVKACKEACAAANVLLKVIIETGELKDEALIRKASEISIKAGADFIKTSTGKVAVNATPESARIMMEVIRDMGVEKTVGFKPAGGVRTAEDAQKYLAIADELFGADWADARHYRFGASSLLASLLKALGHGDGKSASSY</sequence>
<reference key="1">
    <citation type="journal article" date="2008" name="DNA Res.">
        <title>Complete genome sequence and comparative analysis of the wild-type commensal Escherichia coli strain SE11 isolated from a healthy adult.</title>
        <authorList>
            <person name="Oshima K."/>
            <person name="Toh H."/>
            <person name="Ogura Y."/>
            <person name="Sasamoto H."/>
            <person name="Morita H."/>
            <person name="Park S.-H."/>
            <person name="Ooka T."/>
            <person name="Iyoda S."/>
            <person name="Taylor T.D."/>
            <person name="Hayashi T."/>
            <person name="Itoh K."/>
            <person name="Hattori M."/>
        </authorList>
    </citation>
    <scope>NUCLEOTIDE SEQUENCE [LARGE SCALE GENOMIC DNA]</scope>
    <source>
        <strain>SE11</strain>
    </source>
</reference>
<feature type="chain" id="PRO_1000129805" description="Deoxyribose-phosphate aldolase">
    <location>
        <begin position="1"/>
        <end position="259"/>
    </location>
</feature>
<feature type="active site" description="Proton donor/acceptor" evidence="1">
    <location>
        <position position="102"/>
    </location>
</feature>
<feature type="active site" description="Schiff-base intermediate with acetaldehyde" evidence="1">
    <location>
        <position position="167"/>
    </location>
</feature>
<feature type="active site" description="Proton donor/acceptor" evidence="1">
    <location>
        <position position="201"/>
    </location>
</feature>
<name>DEOC_ECOSE</name>
<protein>
    <recommendedName>
        <fullName evidence="1">Deoxyribose-phosphate aldolase</fullName>
        <shortName evidence="1">DERA</shortName>
        <ecNumber evidence="1">4.1.2.4</ecNumber>
    </recommendedName>
    <alternativeName>
        <fullName evidence="1">2-deoxy-D-ribose 5-phosphate aldolase</fullName>
    </alternativeName>
    <alternativeName>
        <fullName evidence="1">Phosphodeoxyriboaldolase</fullName>
        <shortName evidence="1">Deoxyriboaldolase</shortName>
    </alternativeName>
</protein>
<gene>
    <name evidence="1" type="primary">deoC</name>
    <name type="ordered locus">ECSE_4656</name>
</gene>
<organism>
    <name type="scientific">Escherichia coli (strain SE11)</name>
    <dbReference type="NCBI Taxonomy" id="409438"/>
    <lineage>
        <taxon>Bacteria</taxon>
        <taxon>Pseudomonadati</taxon>
        <taxon>Pseudomonadota</taxon>
        <taxon>Gammaproteobacteria</taxon>
        <taxon>Enterobacterales</taxon>
        <taxon>Enterobacteriaceae</taxon>
        <taxon>Escherichia</taxon>
    </lineage>
</organism>
<accession>B6I6M8</accession>
<evidence type="ECO:0000255" key="1">
    <source>
        <dbReference type="HAMAP-Rule" id="MF_00592"/>
    </source>
</evidence>